<dbReference type="PIR" id="A46654">
    <property type="entry name" value="A46654"/>
</dbReference>
<dbReference type="PDB" id="1I8X">
    <property type="method" value="NMR"/>
    <property type="chains" value="A=1-30"/>
</dbReference>
<dbReference type="PDB" id="1I8Y">
    <property type="method" value="NMR"/>
    <property type="chains" value="A=3-30"/>
</dbReference>
<dbReference type="PDB" id="1QGM">
    <property type="method" value="NMR"/>
    <property type="chains" value="A=1-30"/>
</dbReference>
<dbReference type="PDBsum" id="1I8X"/>
<dbReference type="PDBsum" id="1I8Y"/>
<dbReference type="PDBsum" id="1QGM"/>
<dbReference type="SMR" id="P81013"/>
<dbReference type="EvolutionaryTrace" id="P81013"/>
<dbReference type="Proteomes" id="UP000694384">
    <property type="component" value="Unplaced"/>
</dbReference>
<dbReference type="Proteomes" id="UP000694427">
    <property type="component" value="Unplaced"/>
</dbReference>
<dbReference type="Proteomes" id="UP000694700">
    <property type="component" value="Unplaced"/>
</dbReference>
<dbReference type="Proteomes" id="UP000694701">
    <property type="component" value="Unplaced"/>
</dbReference>
<dbReference type="Proteomes" id="UP001155660">
    <property type="component" value="Unplaced"/>
</dbReference>
<dbReference type="GO" id="GO:0005615">
    <property type="term" value="C:extracellular space"/>
    <property type="evidence" value="ECO:0007669"/>
    <property type="project" value="UniProtKB-KW"/>
</dbReference>
<dbReference type="GO" id="GO:0005125">
    <property type="term" value="F:cytokine activity"/>
    <property type="evidence" value="ECO:0007669"/>
    <property type="project" value="UniProtKB-KW"/>
</dbReference>
<dbReference type="Gene3D" id="2.10.25.160">
    <property type="entry name" value="Granulin"/>
    <property type="match status" value="1"/>
</dbReference>
<dbReference type="InterPro" id="IPR000118">
    <property type="entry name" value="Granulin"/>
</dbReference>
<dbReference type="InterPro" id="IPR039036">
    <property type="entry name" value="Granulin_fam"/>
</dbReference>
<dbReference type="InterPro" id="IPR037277">
    <property type="entry name" value="Granulin_sf"/>
</dbReference>
<dbReference type="PANTHER" id="PTHR12274">
    <property type="entry name" value="GRANULIN"/>
    <property type="match status" value="1"/>
</dbReference>
<dbReference type="PANTHER" id="PTHR12274:SF3">
    <property type="entry name" value="PROGRANULIN"/>
    <property type="match status" value="1"/>
</dbReference>
<dbReference type="Pfam" id="PF00396">
    <property type="entry name" value="Granulin"/>
    <property type="match status" value="1"/>
</dbReference>
<dbReference type="SMART" id="SM00277">
    <property type="entry name" value="GRAN"/>
    <property type="match status" value="1"/>
</dbReference>
<dbReference type="SUPFAM" id="SSF57277">
    <property type="entry name" value="Granulin repeat"/>
    <property type="match status" value="1"/>
</dbReference>
<proteinExistence type="evidence at protein level"/>
<accession>P81013</accession>
<protein>
    <recommendedName>
        <fullName>Granulin-1</fullName>
    </recommendedName>
</protein>
<sequence>VIHCDAATICPDGTTCCLSPYGVWYCCPFSMGQCCRDGIHCCRHGYHCDSTSTHCLR</sequence>
<keyword id="KW-0002">3D-structure</keyword>
<keyword id="KW-0202">Cytokine</keyword>
<keyword id="KW-0903">Direct protein sequencing</keyword>
<keyword id="KW-1015">Disulfide bond</keyword>
<keyword id="KW-1185">Reference proteome</keyword>
<keyword id="KW-0964">Secreted</keyword>
<organism>
    <name type="scientific">Cyprinus carpio</name>
    <name type="common">Common carp</name>
    <dbReference type="NCBI Taxonomy" id="7962"/>
    <lineage>
        <taxon>Eukaryota</taxon>
        <taxon>Metazoa</taxon>
        <taxon>Chordata</taxon>
        <taxon>Craniata</taxon>
        <taxon>Vertebrata</taxon>
        <taxon>Euteleostomi</taxon>
        <taxon>Actinopterygii</taxon>
        <taxon>Neopterygii</taxon>
        <taxon>Teleostei</taxon>
        <taxon>Ostariophysi</taxon>
        <taxon>Cypriniformes</taxon>
        <taxon>Cyprinidae</taxon>
        <taxon>Cyprininae</taxon>
        <taxon>Cyprinus</taxon>
    </lineage>
</organism>
<reference key="1">
    <citation type="journal article" date="1993" name="J. Biol. Chem.">
        <title>Isolation and primary structure of the three major forms of granulin-like peptides from hematopoietic tissues of a teleost fish (Cyprinus carpio).</title>
        <authorList>
            <person name="Belcourt D.R."/>
            <person name="Lazure C."/>
            <person name="Bennett H.P."/>
        </authorList>
    </citation>
    <scope>PROTEIN SEQUENCE</scope>
    <source>
        <tissue>Kidney</tissue>
        <tissue>Spleen</tissue>
    </source>
</reference>
<reference key="2">
    <citation type="journal article" date="1999" name="J. Pept. Res.">
        <title>A 30-residue fragment of the carp granulin-1 protein folds into a stack of two beta-hairpins similar to that found in the native protein.</title>
        <authorList>
            <person name="Vranken W.F."/>
            <person name="Chen Z.G."/>
            <person name="Xu P."/>
            <person name="James S."/>
            <person name="Bennett H.P."/>
            <person name="Ni F."/>
        </authorList>
    </citation>
    <scope>STRUCTURE BY NMR OF 1-30</scope>
</reference>
<reference key="3">
    <citation type="journal article" date="2002" name="Proteins">
        <title>Solution structures of a 30-residue amino-terminal domain of the carp granulin-1 protein and its amino-terminally truncated 3-30 subfragment: implications for the conformational stability of the stack of two beta-hairpins.</title>
        <authorList>
            <person name="Vranken W.F."/>
            <person name="James S."/>
            <person name="Bennett H.P."/>
            <person name="Ni F."/>
        </authorList>
    </citation>
    <scope>STRUCTURE BY NMR OF 3-30</scope>
</reference>
<name>GRN1_CYPCA</name>
<evidence type="ECO:0000305" key="1"/>
<evidence type="ECO:0007829" key="2">
    <source>
        <dbReference type="PDB" id="1I8X"/>
    </source>
</evidence>
<feature type="chain" id="PRO_0000150130" description="Granulin-1">
    <location>
        <begin position="1"/>
        <end position="57"/>
    </location>
</feature>
<feature type="disulfide bond">
    <location>
        <begin position="4"/>
        <end position="16"/>
    </location>
</feature>
<feature type="disulfide bond">
    <location>
        <begin position="10"/>
        <end position="26"/>
    </location>
</feature>
<feature type="turn" evidence="2">
    <location>
        <begin position="4"/>
        <end position="7"/>
    </location>
</feature>
<feature type="strand" evidence="2">
    <location>
        <begin position="14"/>
        <end position="18"/>
    </location>
</feature>
<feature type="strand" evidence="2">
    <location>
        <begin position="24"/>
        <end position="28"/>
    </location>
</feature>
<comment type="function">
    <text>Granulins have possible cytokine-like activity. They may play a role in inflammation, wound repair, and tissue remodeling.</text>
</comment>
<comment type="subcellular location">
    <subcellularLocation>
        <location>Secreted</location>
    </subcellularLocation>
</comment>
<comment type="tissue specificity">
    <text>Ubiquitous.</text>
</comment>
<comment type="PTM">
    <text>Granulins are disulfide bridged.</text>
</comment>
<comment type="similarity">
    <text evidence="1">Belongs to the granulin family.</text>
</comment>